<organism>
    <name type="scientific">Salmonella typhi</name>
    <dbReference type="NCBI Taxonomy" id="90370"/>
    <lineage>
        <taxon>Bacteria</taxon>
        <taxon>Pseudomonadati</taxon>
        <taxon>Pseudomonadota</taxon>
        <taxon>Gammaproteobacteria</taxon>
        <taxon>Enterobacterales</taxon>
        <taxon>Enterobacteriaceae</taxon>
        <taxon>Salmonella</taxon>
    </lineage>
</organism>
<reference key="1">
    <citation type="journal article" date="2001" name="Nature">
        <title>Complete genome sequence of a multiple drug resistant Salmonella enterica serovar Typhi CT18.</title>
        <authorList>
            <person name="Parkhill J."/>
            <person name="Dougan G."/>
            <person name="James K.D."/>
            <person name="Thomson N.R."/>
            <person name="Pickard D."/>
            <person name="Wain J."/>
            <person name="Churcher C.M."/>
            <person name="Mungall K.L."/>
            <person name="Bentley S.D."/>
            <person name="Holden M.T.G."/>
            <person name="Sebaihia M."/>
            <person name="Baker S."/>
            <person name="Basham D."/>
            <person name="Brooks K."/>
            <person name="Chillingworth T."/>
            <person name="Connerton P."/>
            <person name="Cronin A."/>
            <person name="Davis P."/>
            <person name="Davies R.M."/>
            <person name="Dowd L."/>
            <person name="White N."/>
            <person name="Farrar J."/>
            <person name="Feltwell T."/>
            <person name="Hamlin N."/>
            <person name="Haque A."/>
            <person name="Hien T.T."/>
            <person name="Holroyd S."/>
            <person name="Jagels K."/>
            <person name="Krogh A."/>
            <person name="Larsen T.S."/>
            <person name="Leather S."/>
            <person name="Moule S."/>
            <person name="O'Gaora P."/>
            <person name="Parry C."/>
            <person name="Quail M.A."/>
            <person name="Rutherford K.M."/>
            <person name="Simmonds M."/>
            <person name="Skelton J."/>
            <person name="Stevens K."/>
            <person name="Whitehead S."/>
            <person name="Barrell B.G."/>
        </authorList>
    </citation>
    <scope>NUCLEOTIDE SEQUENCE [LARGE SCALE GENOMIC DNA]</scope>
    <source>
        <strain>CT18</strain>
    </source>
</reference>
<reference key="2">
    <citation type="journal article" date="2003" name="J. Bacteriol.">
        <title>Comparative genomics of Salmonella enterica serovar Typhi strains Ty2 and CT18.</title>
        <authorList>
            <person name="Deng W."/>
            <person name="Liou S.-R."/>
            <person name="Plunkett G. III"/>
            <person name="Mayhew G.F."/>
            <person name="Rose D.J."/>
            <person name="Burland V."/>
            <person name="Kodoyianni V."/>
            <person name="Schwartz D.C."/>
            <person name="Blattner F.R."/>
        </authorList>
    </citation>
    <scope>NUCLEOTIDE SEQUENCE [LARGE SCALE GENOMIC DNA]</scope>
    <source>
        <strain>ATCC 700931 / Ty2</strain>
    </source>
</reference>
<protein>
    <recommendedName>
        <fullName>Protein FliZ</fullName>
    </recommendedName>
</protein>
<sequence length="183" mass="21688">MTVQQPKRRPLSRYLKDFKHSQTHCAHCHKLLDRITLVRRGKIVNKIAISQLDMLLDDAAWQREQKEWVALCRFCGDLHCKKQSDFFDIIGFKQYLFEQTEMSHGTVREYVVRLRRLGNYLSEQNISHDLLQDGFLDESLAPWLPETSTNNYRIALRKYQQYKAHQQIAPRQKSPFTASSDIY</sequence>
<gene>
    <name type="primary">fliZ</name>
    <name type="ordered locus">STY2163</name>
    <name type="ordered locus">t0921</name>
</gene>
<comment type="function">
    <text>May regulate sigma factor activity.</text>
</comment>
<accession>P0A211</accession>
<accession>P52628</accession>
<accession>Q9S1C1</accession>
<feature type="chain" id="PRO_0000087289" description="Protein FliZ">
    <location>
        <begin position="1"/>
        <end position="183"/>
    </location>
</feature>
<proteinExistence type="predicted"/>
<name>FLIZ_SALTI</name>
<dbReference type="EMBL" id="AL513382">
    <property type="protein sequence ID" value="CAD05704.1"/>
    <property type="molecule type" value="Genomic_DNA"/>
</dbReference>
<dbReference type="EMBL" id="AE014613">
    <property type="protein sequence ID" value="AAO68598.1"/>
    <property type="molecule type" value="Genomic_DNA"/>
</dbReference>
<dbReference type="RefSeq" id="NP_456518.1">
    <property type="nucleotide sequence ID" value="NC_003198.1"/>
</dbReference>
<dbReference type="RefSeq" id="WP_000218080.1">
    <property type="nucleotide sequence ID" value="NZ_WSUR01000004.1"/>
</dbReference>
<dbReference type="STRING" id="220341.gene:17586072"/>
<dbReference type="KEGG" id="stt:t0921"/>
<dbReference type="KEGG" id="sty:STY2163"/>
<dbReference type="PATRIC" id="fig|220341.7.peg.2175"/>
<dbReference type="eggNOG" id="ENOG502Z9YQ">
    <property type="taxonomic scope" value="Bacteria"/>
</dbReference>
<dbReference type="HOGENOM" id="CLU_132109_0_0_6"/>
<dbReference type="OMA" id="GDLHCKE"/>
<dbReference type="OrthoDB" id="6503944at2"/>
<dbReference type="Proteomes" id="UP000000541">
    <property type="component" value="Chromosome"/>
</dbReference>
<dbReference type="Proteomes" id="UP000002670">
    <property type="component" value="Chromosome"/>
</dbReference>
<dbReference type="GO" id="GO:0003677">
    <property type="term" value="F:DNA binding"/>
    <property type="evidence" value="ECO:0007669"/>
    <property type="project" value="InterPro"/>
</dbReference>
<dbReference type="GO" id="GO:0015074">
    <property type="term" value="P:DNA integration"/>
    <property type="evidence" value="ECO:0007669"/>
    <property type="project" value="InterPro"/>
</dbReference>
<dbReference type="InterPro" id="IPR022523">
    <property type="entry name" value="Flagellar_regulator_FliZ"/>
</dbReference>
<dbReference type="InterPro" id="IPR004107">
    <property type="entry name" value="Integrase_SAM-like_N"/>
</dbReference>
<dbReference type="NCBIfam" id="TIGR03823">
    <property type="entry name" value="FliZ"/>
    <property type="match status" value="1"/>
</dbReference>
<dbReference type="Pfam" id="PF02899">
    <property type="entry name" value="Phage_int_SAM_1"/>
    <property type="match status" value="1"/>
</dbReference>